<keyword id="KW-0963">Cytoplasm</keyword>
<dbReference type="EMBL" id="AF091327">
    <property type="protein sequence ID" value="AAC67579.1"/>
    <property type="molecule type" value="Genomic_DNA"/>
</dbReference>
<dbReference type="SMR" id="O96566"/>
<dbReference type="OrthoDB" id="2219495at2759"/>
<dbReference type="GO" id="GO:0005737">
    <property type="term" value="C:cytoplasm"/>
    <property type="evidence" value="ECO:0000250"/>
    <property type="project" value="UniProtKB"/>
</dbReference>
<dbReference type="GO" id="GO:0046592">
    <property type="term" value="F:polyamine oxidase activity"/>
    <property type="evidence" value="ECO:0007669"/>
    <property type="project" value="TreeGrafter"/>
</dbReference>
<dbReference type="Gene3D" id="3.90.660.10">
    <property type="match status" value="1"/>
</dbReference>
<dbReference type="Gene3D" id="3.50.50.60">
    <property type="entry name" value="FAD/NAD(P)-binding domain"/>
    <property type="match status" value="1"/>
</dbReference>
<dbReference type="InterPro" id="IPR002937">
    <property type="entry name" value="Amino_oxidase"/>
</dbReference>
<dbReference type="InterPro" id="IPR036188">
    <property type="entry name" value="FAD/NAD-bd_sf"/>
</dbReference>
<dbReference type="InterPro" id="IPR050281">
    <property type="entry name" value="Flavin_monoamine_oxidase"/>
</dbReference>
<dbReference type="PANTHER" id="PTHR10742:SF398">
    <property type="entry name" value="AMINE OXIDASE DOMAIN-CONTAINING PROTEIN-RELATED"/>
    <property type="match status" value="1"/>
</dbReference>
<dbReference type="PANTHER" id="PTHR10742">
    <property type="entry name" value="FLAVIN MONOAMINE OXIDASE"/>
    <property type="match status" value="1"/>
</dbReference>
<dbReference type="Pfam" id="PF01593">
    <property type="entry name" value="Amino_oxidase"/>
    <property type="match status" value="1"/>
</dbReference>
<dbReference type="SUPFAM" id="SSF54373">
    <property type="entry name" value="FAD-linked reductases, C-terminal domain"/>
    <property type="match status" value="1"/>
</dbReference>
<dbReference type="SUPFAM" id="SSF51905">
    <property type="entry name" value="FAD/NAD(P)-binding domain"/>
    <property type="match status" value="1"/>
</dbReference>
<feature type="chain" id="PRO_0000064405" description="Protein anon-37Cs">
    <location>
        <begin position="1" status="less than"/>
        <end position="501"/>
    </location>
</feature>
<feature type="non-terminal residue">
    <location>
        <position position="1"/>
    </location>
</feature>
<protein>
    <recommendedName>
        <fullName>Protein anon-37Cs</fullName>
    </recommendedName>
</protein>
<comment type="function">
    <text evidence="1">Has a non-vital function.</text>
</comment>
<comment type="subcellular location">
    <subcellularLocation>
        <location evidence="1">Cytoplasm</location>
    </subcellularLocation>
</comment>
<sequence length="501" mass="56019">FKLASRRRLYNARVLQADNIGDKQRNPDVDAARQNTQIVVVGAGLPGLSAAQHLLYNGFRRTVILEATDRYGGRINTQRFGDTYCELGAKWVKIDGSQDSMYELLRNTEGLDKQIKQPDRATYLQDGSHINPAMVELIDTLFRQLCRGFKVSERVKTGGDLHSLDNVMNYFRTESDRIIGTSFQQPKDQLAAREIFQSLFKEFGSILGCCLEYVNIEHITKCPVQQELRPLYVPTGLDNVVDDLIQNMDKAQLQTGKPVGQIQWTPAPMKSVGCLDGSLYNADHIICTLPLGVLKSFAGVLFRPTLPLDKMLAIRNLGFGNPLKIYLSYKKPIGRWLKGSLRPLGTLLNPSAEQQPERNWTQQVVEISQVPSSQHVLEVHVGGGYYEEIEKLPDDELLEQITGLLRRCVSNNLVPYPQELLRSNWSTSACYLGGRPYFSTINSARDVQRLAAPLGEKSPGLLFAGDATSLNGFGTIDAARSSGIREAQRIIDFYLKRAHFG</sequence>
<accession>O96566</accession>
<organism>
    <name type="scientific">Drosophila simulans</name>
    <name type="common">Fruit fly</name>
    <dbReference type="NCBI Taxonomy" id="7240"/>
    <lineage>
        <taxon>Eukaryota</taxon>
        <taxon>Metazoa</taxon>
        <taxon>Ecdysozoa</taxon>
        <taxon>Arthropoda</taxon>
        <taxon>Hexapoda</taxon>
        <taxon>Insecta</taxon>
        <taxon>Pterygota</taxon>
        <taxon>Neoptera</taxon>
        <taxon>Endopterygota</taxon>
        <taxon>Diptera</taxon>
        <taxon>Brachycera</taxon>
        <taxon>Muscomorpha</taxon>
        <taxon>Ephydroidea</taxon>
        <taxon>Drosophilidae</taxon>
        <taxon>Drosophila</taxon>
        <taxon>Sophophora</taxon>
    </lineage>
</organism>
<name>A37C_DROSI</name>
<proteinExistence type="inferred from homology"/>
<gene>
    <name type="primary">anon-37Cs</name>
    <name type="synonym">Cs</name>
    <name type="ORF">GD24185</name>
</gene>
<evidence type="ECO:0000250" key="1"/>
<evidence type="ECO:0000305" key="2"/>
<reference evidence="2" key="1">
    <citation type="journal article" date="1999" name="Gene">
        <title>A compact gene cluster in Drosophila: the unrelated Cs gene is compressed between duplicated amd and Ddc.</title>
        <authorList>
            <person name="Tatarenkov A."/>
            <person name="Saez A.G."/>
            <person name="Ayala F.J."/>
        </authorList>
    </citation>
    <scope>NUCLEOTIDE SEQUENCE [GENOMIC DNA]</scope>
    <source>
        <strain>St. Lucia</strain>
    </source>
</reference>